<name>ATPB_TRIDV</name>
<accession>O03085</accession>
<protein>
    <recommendedName>
        <fullName evidence="1">ATP synthase subunit beta, chloroplastic</fullName>
        <ecNumber evidence="1">7.1.2.2</ecNumber>
    </recommendedName>
    <alternativeName>
        <fullName evidence="1">ATP synthase F1 sector subunit beta</fullName>
    </alternativeName>
    <alternativeName>
        <fullName evidence="1">F-ATPase subunit beta</fullName>
    </alternativeName>
</protein>
<dbReference type="EC" id="7.1.2.2" evidence="1"/>
<dbReference type="EMBL" id="U93828">
    <property type="protein sequence ID" value="AAB51736.3"/>
    <property type="molecule type" value="Genomic_DNA"/>
</dbReference>
<dbReference type="GO" id="GO:0009535">
    <property type="term" value="C:chloroplast thylakoid membrane"/>
    <property type="evidence" value="ECO:0007669"/>
    <property type="project" value="UniProtKB-SubCell"/>
</dbReference>
<dbReference type="GO" id="GO:0005739">
    <property type="term" value="C:mitochondrion"/>
    <property type="evidence" value="ECO:0007669"/>
    <property type="project" value="GOC"/>
</dbReference>
<dbReference type="GO" id="GO:0045259">
    <property type="term" value="C:proton-transporting ATP synthase complex"/>
    <property type="evidence" value="ECO:0007669"/>
    <property type="project" value="UniProtKB-KW"/>
</dbReference>
<dbReference type="GO" id="GO:0005524">
    <property type="term" value="F:ATP binding"/>
    <property type="evidence" value="ECO:0007669"/>
    <property type="project" value="UniProtKB-KW"/>
</dbReference>
<dbReference type="GO" id="GO:0016887">
    <property type="term" value="F:ATP hydrolysis activity"/>
    <property type="evidence" value="ECO:0007669"/>
    <property type="project" value="InterPro"/>
</dbReference>
<dbReference type="GO" id="GO:0046933">
    <property type="term" value="F:proton-transporting ATP synthase activity, rotational mechanism"/>
    <property type="evidence" value="ECO:0007669"/>
    <property type="project" value="InterPro"/>
</dbReference>
<dbReference type="GO" id="GO:0042776">
    <property type="term" value="P:proton motive force-driven mitochondrial ATP synthesis"/>
    <property type="evidence" value="ECO:0007669"/>
    <property type="project" value="TreeGrafter"/>
</dbReference>
<dbReference type="CDD" id="cd18110">
    <property type="entry name" value="ATP-synt_F1_beta_C"/>
    <property type="match status" value="1"/>
</dbReference>
<dbReference type="CDD" id="cd18115">
    <property type="entry name" value="ATP-synt_F1_beta_N"/>
    <property type="match status" value="1"/>
</dbReference>
<dbReference type="CDD" id="cd01133">
    <property type="entry name" value="F1-ATPase_beta_CD"/>
    <property type="match status" value="1"/>
</dbReference>
<dbReference type="FunFam" id="1.10.1140.10:FF:000001">
    <property type="entry name" value="ATP synthase subunit beta"/>
    <property type="match status" value="1"/>
</dbReference>
<dbReference type="FunFam" id="3.40.50.12240:FF:000006">
    <property type="entry name" value="ATP synthase subunit beta"/>
    <property type="match status" value="1"/>
</dbReference>
<dbReference type="FunFam" id="3.40.50.300:FF:000004">
    <property type="entry name" value="ATP synthase subunit beta"/>
    <property type="match status" value="1"/>
</dbReference>
<dbReference type="FunFam" id="2.40.10.170:FF:000002">
    <property type="entry name" value="ATP synthase subunit beta, chloroplastic"/>
    <property type="match status" value="1"/>
</dbReference>
<dbReference type="Gene3D" id="2.40.10.170">
    <property type="match status" value="1"/>
</dbReference>
<dbReference type="Gene3D" id="1.10.1140.10">
    <property type="entry name" value="Bovine Mitochondrial F1-atpase, Atp Synthase Beta Chain, Chain D, domain 3"/>
    <property type="match status" value="1"/>
</dbReference>
<dbReference type="Gene3D" id="3.40.50.300">
    <property type="entry name" value="P-loop containing nucleotide triphosphate hydrolases"/>
    <property type="match status" value="1"/>
</dbReference>
<dbReference type="HAMAP" id="MF_01347">
    <property type="entry name" value="ATP_synth_beta_bact"/>
    <property type="match status" value="1"/>
</dbReference>
<dbReference type="InterPro" id="IPR003593">
    <property type="entry name" value="AAA+_ATPase"/>
</dbReference>
<dbReference type="InterPro" id="IPR055190">
    <property type="entry name" value="ATP-synt_VA_C"/>
</dbReference>
<dbReference type="InterPro" id="IPR005722">
    <property type="entry name" value="ATP_synth_F1_bsu"/>
</dbReference>
<dbReference type="InterPro" id="IPR020003">
    <property type="entry name" value="ATPase_a/bsu_AS"/>
</dbReference>
<dbReference type="InterPro" id="IPR050053">
    <property type="entry name" value="ATPase_alpha/beta_chains"/>
</dbReference>
<dbReference type="InterPro" id="IPR004100">
    <property type="entry name" value="ATPase_F1/V1/A1_a/bsu_N"/>
</dbReference>
<dbReference type="InterPro" id="IPR036121">
    <property type="entry name" value="ATPase_F1/V1/A1_a/bsu_N_sf"/>
</dbReference>
<dbReference type="InterPro" id="IPR000194">
    <property type="entry name" value="ATPase_F1/V1/A1_a/bsu_nucl-bd"/>
</dbReference>
<dbReference type="InterPro" id="IPR024034">
    <property type="entry name" value="ATPase_F1/V1_b/a_C"/>
</dbReference>
<dbReference type="InterPro" id="IPR027417">
    <property type="entry name" value="P-loop_NTPase"/>
</dbReference>
<dbReference type="NCBIfam" id="TIGR01039">
    <property type="entry name" value="atpD"/>
    <property type="match status" value="1"/>
</dbReference>
<dbReference type="PANTHER" id="PTHR15184">
    <property type="entry name" value="ATP SYNTHASE"/>
    <property type="match status" value="1"/>
</dbReference>
<dbReference type="PANTHER" id="PTHR15184:SF71">
    <property type="entry name" value="ATP SYNTHASE SUBUNIT BETA, MITOCHONDRIAL"/>
    <property type="match status" value="1"/>
</dbReference>
<dbReference type="Pfam" id="PF00006">
    <property type="entry name" value="ATP-synt_ab"/>
    <property type="match status" value="1"/>
</dbReference>
<dbReference type="Pfam" id="PF02874">
    <property type="entry name" value="ATP-synt_ab_N"/>
    <property type="match status" value="1"/>
</dbReference>
<dbReference type="Pfam" id="PF22919">
    <property type="entry name" value="ATP-synt_VA_C"/>
    <property type="match status" value="1"/>
</dbReference>
<dbReference type="SMART" id="SM00382">
    <property type="entry name" value="AAA"/>
    <property type="match status" value="1"/>
</dbReference>
<dbReference type="SUPFAM" id="SSF47917">
    <property type="entry name" value="C-terminal domain of alpha and beta subunits of F1 ATP synthase"/>
    <property type="match status" value="1"/>
</dbReference>
<dbReference type="SUPFAM" id="SSF50615">
    <property type="entry name" value="N-terminal domain of alpha and beta subunits of F1 ATP synthase"/>
    <property type="match status" value="1"/>
</dbReference>
<dbReference type="SUPFAM" id="SSF52540">
    <property type="entry name" value="P-loop containing nucleoside triphosphate hydrolases"/>
    <property type="match status" value="1"/>
</dbReference>
<dbReference type="PROSITE" id="PS00152">
    <property type="entry name" value="ATPASE_ALPHA_BETA"/>
    <property type="match status" value="1"/>
</dbReference>
<gene>
    <name evidence="1" type="primary">atpB</name>
</gene>
<sequence>EKNVGQITQIIGPVLDVAFSPGKMPNIYNSLLIKGQNPAGQEINVTCEVQQLLGNNEVRAVAMSATDGLMRGMNVVDTGAPLSVPVGEITLGXIFNVLGDPVDNLGPVDTSTTFPIHRSAPAFTQLDTKLSIFETGIKVVDLLAPYRRGGKIGLFGGAGVGKTVLIMELINNIAKAHGGVSVFGGVGERTREGNDLYMEMKESKVINEQNISESKVALVYGQMNEPPGARMRVGLTALTMAEYFRDVNKQDVLLFIDNIFRFVQAGSEVSALLGRMPSAVGYQPTLGTEMGTLQERITSTKEGSITSIQAVYVPADDLTDPAPATTFAHLDATTVLSRGLAAKGIYPAVDPLDSTSTMLQPWIVGEEHYETAQGVKQTLQRYKELQDIIAILGLDELSEEDRLTVARARKIERFLSQPFFVAEVFTGSPGKYVSLIETIKGFQMILSGELDNLPEQAFYLVGNIDEATTKAVSLQVEGQ</sequence>
<geneLocation type="chloroplast"/>
<comment type="function">
    <text evidence="1">Produces ATP from ADP in the presence of a proton gradient across the membrane. The catalytic sites are hosted primarily by the beta subunits.</text>
</comment>
<comment type="catalytic activity">
    <reaction evidence="1">
        <text>ATP + H2O + 4 H(+)(in) = ADP + phosphate + 5 H(+)(out)</text>
        <dbReference type="Rhea" id="RHEA:57720"/>
        <dbReference type="ChEBI" id="CHEBI:15377"/>
        <dbReference type="ChEBI" id="CHEBI:15378"/>
        <dbReference type="ChEBI" id="CHEBI:30616"/>
        <dbReference type="ChEBI" id="CHEBI:43474"/>
        <dbReference type="ChEBI" id="CHEBI:456216"/>
        <dbReference type="EC" id="7.1.2.2"/>
    </reaction>
</comment>
<comment type="subunit">
    <text evidence="1">F-type ATPases have 2 components, CF(1) - the catalytic core - and CF(0) - the membrane proton channel. CF(1) has five subunits: alpha(3), beta(3), gamma(1), delta(1), epsilon(1). CF(0) has four main subunits: a(1), b(1), b'(1) and c(9-12).</text>
</comment>
<comment type="subcellular location">
    <subcellularLocation>
        <location evidence="1">Plastid</location>
        <location evidence="1">Chloroplast thylakoid membrane</location>
        <topology evidence="1">Peripheral membrane protein</topology>
    </subcellularLocation>
</comment>
<comment type="similarity">
    <text evidence="1">Belongs to the ATPase alpha/beta chains family.</text>
</comment>
<feature type="chain" id="PRO_0000144552" description="ATP synthase subunit beta, chloroplastic">
    <location>
        <begin position="1" status="less than"/>
        <end position="479"/>
    </location>
</feature>
<feature type="binding site" evidence="1">
    <location>
        <begin position="156"/>
        <end position="163"/>
    </location>
    <ligand>
        <name>ATP</name>
        <dbReference type="ChEBI" id="CHEBI:30616"/>
    </ligand>
</feature>
<feature type="non-terminal residue">
    <location>
        <position position="1"/>
    </location>
</feature>
<reference key="1">
    <citation type="submission" date="2001-06" db="EMBL/GenBank/DDBJ databases">
        <authorList>
            <person name="Wolf P.G."/>
            <person name="Su P.-H."/>
        </authorList>
    </citation>
    <scope>NUCLEOTIDE SEQUENCE [GENOMIC DNA]</scope>
    <scope>SEQUENCE REVISION TO 120 AND 447</scope>
</reference>
<reference key="2">
    <citation type="journal article" date="1997" name="Am. J. Bot.">
        <title>Evaluation of atpB nucleotide sequences for phylogenetic studies of ferns and other pteridophytes.</title>
        <authorList>
            <person name="Wolf P.G."/>
        </authorList>
    </citation>
    <scope>NUCLEOTIDE SEQUENCE [GENOMIC DNA] OF 1-461</scope>
    <source>
        <tissue>Frond</tissue>
    </source>
</reference>
<organism>
    <name type="scientific">Trichomanes davallioides</name>
    <name type="common">Kilau fern</name>
    <name type="synonym">Vandenboschia davallioides</name>
    <dbReference type="NCBI Taxonomy" id="29621"/>
    <lineage>
        <taxon>Eukaryota</taxon>
        <taxon>Viridiplantae</taxon>
        <taxon>Streptophyta</taxon>
        <taxon>Embryophyta</taxon>
        <taxon>Tracheophyta</taxon>
        <taxon>Polypodiopsida</taxon>
        <taxon>Polypodiidae</taxon>
        <taxon>Hymenophyllales</taxon>
        <taxon>Hymenophyllaceae</taxon>
        <taxon>Trichomanoideae</taxon>
        <taxon>Trichomanes</taxon>
    </lineage>
</organism>
<keyword id="KW-0066">ATP synthesis</keyword>
<keyword id="KW-0067">ATP-binding</keyword>
<keyword id="KW-0139">CF(1)</keyword>
<keyword id="KW-0150">Chloroplast</keyword>
<keyword id="KW-0375">Hydrogen ion transport</keyword>
<keyword id="KW-0406">Ion transport</keyword>
<keyword id="KW-0472">Membrane</keyword>
<keyword id="KW-0547">Nucleotide-binding</keyword>
<keyword id="KW-0934">Plastid</keyword>
<keyword id="KW-0793">Thylakoid</keyword>
<keyword id="KW-1278">Translocase</keyword>
<keyword id="KW-0813">Transport</keyword>
<evidence type="ECO:0000255" key="1">
    <source>
        <dbReference type="HAMAP-Rule" id="MF_01347"/>
    </source>
</evidence>
<proteinExistence type="inferred from homology"/>